<reference key="1">
    <citation type="submission" date="2006-06" db="EMBL/GenBank/DDBJ databases">
        <title>Complete sequence of Pseudoalteromonas atlantica T6c.</title>
        <authorList>
            <consortium name="US DOE Joint Genome Institute"/>
            <person name="Copeland A."/>
            <person name="Lucas S."/>
            <person name="Lapidus A."/>
            <person name="Barry K."/>
            <person name="Detter J.C."/>
            <person name="Glavina del Rio T."/>
            <person name="Hammon N."/>
            <person name="Israni S."/>
            <person name="Dalin E."/>
            <person name="Tice H."/>
            <person name="Pitluck S."/>
            <person name="Saunders E."/>
            <person name="Brettin T."/>
            <person name="Bruce D."/>
            <person name="Han C."/>
            <person name="Tapia R."/>
            <person name="Gilna P."/>
            <person name="Schmutz J."/>
            <person name="Larimer F."/>
            <person name="Land M."/>
            <person name="Hauser L."/>
            <person name="Kyrpides N."/>
            <person name="Kim E."/>
            <person name="Karls A.C."/>
            <person name="Bartlett D."/>
            <person name="Higgins B.P."/>
            <person name="Richardson P."/>
        </authorList>
    </citation>
    <scope>NUCLEOTIDE SEQUENCE [LARGE SCALE GENOMIC DNA]</scope>
    <source>
        <strain>T6c / ATCC BAA-1087</strain>
    </source>
</reference>
<proteinExistence type="inferred from homology"/>
<name>COAD_PSEA6</name>
<sequence>MHTKAVYPGTFDPITNGHADLIERAANMFAHVIVGIAANPSKKPLFSLQERVDLIKEVTEHLPNVEVIGFEGLLADFADSQGATVLIRGLRAVSDFEYEFQLANMNRRLNPNLESIFLTPAEENSFISSTLVKEVALHRGKVDQFCHPAVQAALKEKLQQ</sequence>
<comment type="function">
    <text evidence="1">Reversibly transfers an adenylyl group from ATP to 4'-phosphopantetheine, yielding dephospho-CoA (dPCoA) and pyrophosphate.</text>
</comment>
<comment type="catalytic activity">
    <reaction evidence="1">
        <text>(R)-4'-phosphopantetheine + ATP + H(+) = 3'-dephospho-CoA + diphosphate</text>
        <dbReference type="Rhea" id="RHEA:19801"/>
        <dbReference type="ChEBI" id="CHEBI:15378"/>
        <dbReference type="ChEBI" id="CHEBI:30616"/>
        <dbReference type="ChEBI" id="CHEBI:33019"/>
        <dbReference type="ChEBI" id="CHEBI:57328"/>
        <dbReference type="ChEBI" id="CHEBI:61723"/>
        <dbReference type="EC" id="2.7.7.3"/>
    </reaction>
</comment>
<comment type="cofactor">
    <cofactor evidence="1">
        <name>Mg(2+)</name>
        <dbReference type="ChEBI" id="CHEBI:18420"/>
    </cofactor>
</comment>
<comment type="pathway">
    <text evidence="1">Cofactor biosynthesis; coenzyme A biosynthesis; CoA from (R)-pantothenate: step 4/5.</text>
</comment>
<comment type="subunit">
    <text evidence="1">Homohexamer.</text>
</comment>
<comment type="subcellular location">
    <subcellularLocation>
        <location evidence="1">Cytoplasm</location>
    </subcellularLocation>
</comment>
<comment type="similarity">
    <text evidence="1">Belongs to the bacterial CoaD family.</text>
</comment>
<feature type="chain" id="PRO_1000011204" description="Phosphopantetheine adenylyltransferase">
    <location>
        <begin position="1"/>
        <end position="160"/>
    </location>
</feature>
<feature type="binding site" evidence="1">
    <location>
        <begin position="10"/>
        <end position="11"/>
    </location>
    <ligand>
        <name>ATP</name>
        <dbReference type="ChEBI" id="CHEBI:30616"/>
    </ligand>
</feature>
<feature type="binding site" evidence="1">
    <location>
        <position position="10"/>
    </location>
    <ligand>
        <name>substrate</name>
    </ligand>
</feature>
<feature type="binding site" evidence="1">
    <location>
        <position position="18"/>
    </location>
    <ligand>
        <name>ATP</name>
        <dbReference type="ChEBI" id="CHEBI:30616"/>
    </ligand>
</feature>
<feature type="binding site" evidence="1">
    <location>
        <position position="42"/>
    </location>
    <ligand>
        <name>substrate</name>
    </ligand>
</feature>
<feature type="binding site" evidence="1">
    <location>
        <position position="74"/>
    </location>
    <ligand>
        <name>substrate</name>
    </ligand>
</feature>
<feature type="binding site" evidence="1">
    <location>
        <position position="88"/>
    </location>
    <ligand>
        <name>substrate</name>
    </ligand>
</feature>
<feature type="binding site" evidence="1">
    <location>
        <begin position="89"/>
        <end position="91"/>
    </location>
    <ligand>
        <name>ATP</name>
        <dbReference type="ChEBI" id="CHEBI:30616"/>
    </ligand>
</feature>
<feature type="binding site" evidence="1">
    <location>
        <position position="99"/>
    </location>
    <ligand>
        <name>ATP</name>
        <dbReference type="ChEBI" id="CHEBI:30616"/>
    </ligand>
</feature>
<feature type="binding site" evidence="1">
    <location>
        <begin position="124"/>
        <end position="130"/>
    </location>
    <ligand>
        <name>ATP</name>
        <dbReference type="ChEBI" id="CHEBI:30616"/>
    </ligand>
</feature>
<feature type="site" description="Transition state stabilizer" evidence="1">
    <location>
        <position position="18"/>
    </location>
</feature>
<evidence type="ECO:0000255" key="1">
    <source>
        <dbReference type="HAMAP-Rule" id="MF_00151"/>
    </source>
</evidence>
<dbReference type="EC" id="2.7.7.3" evidence="1"/>
<dbReference type="EMBL" id="CP000388">
    <property type="protein sequence ID" value="ABG38585.1"/>
    <property type="molecule type" value="Genomic_DNA"/>
</dbReference>
<dbReference type="RefSeq" id="WP_006993460.1">
    <property type="nucleotide sequence ID" value="NC_008228.1"/>
</dbReference>
<dbReference type="SMR" id="Q15ZV3"/>
<dbReference type="STRING" id="342610.Patl_0053"/>
<dbReference type="KEGG" id="pat:Patl_0053"/>
<dbReference type="eggNOG" id="COG0669">
    <property type="taxonomic scope" value="Bacteria"/>
</dbReference>
<dbReference type="HOGENOM" id="CLU_100149_0_1_6"/>
<dbReference type="OrthoDB" id="9806661at2"/>
<dbReference type="UniPathway" id="UPA00241">
    <property type="reaction ID" value="UER00355"/>
</dbReference>
<dbReference type="Proteomes" id="UP000001981">
    <property type="component" value="Chromosome"/>
</dbReference>
<dbReference type="GO" id="GO:0005737">
    <property type="term" value="C:cytoplasm"/>
    <property type="evidence" value="ECO:0007669"/>
    <property type="project" value="UniProtKB-SubCell"/>
</dbReference>
<dbReference type="GO" id="GO:0005524">
    <property type="term" value="F:ATP binding"/>
    <property type="evidence" value="ECO:0007669"/>
    <property type="project" value="UniProtKB-KW"/>
</dbReference>
<dbReference type="GO" id="GO:0004595">
    <property type="term" value="F:pantetheine-phosphate adenylyltransferase activity"/>
    <property type="evidence" value="ECO:0007669"/>
    <property type="project" value="UniProtKB-UniRule"/>
</dbReference>
<dbReference type="GO" id="GO:0015937">
    <property type="term" value="P:coenzyme A biosynthetic process"/>
    <property type="evidence" value="ECO:0007669"/>
    <property type="project" value="UniProtKB-UniRule"/>
</dbReference>
<dbReference type="CDD" id="cd02163">
    <property type="entry name" value="PPAT"/>
    <property type="match status" value="1"/>
</dbReference>
<dbReference type="FunFam" id="3.40.50.620:FF:000012">
    <property type="entry name" value="Phosphopantetheine adenylyltransferase"/>
    <property type="match status" value="1"/>
</dbReference>
<dbReference type="Gene3D" id="3.40.50.620">
    <property type="entry name" value="HUPs"/>
    <property type="match status" value="1"/>
</dbReference>
<dbReference type="HAMAP" id="MF_00151">
    <property type="entry name" value="PPAT_bact"/>
    <property type="match status" value="1"/>
</dbReference>
<dbReference type="InterPro" id="IPR004821">
    <property type="entry name" value="Cyt_trans-like"/>
</dbReference>
<dbReference type="InterPro" id="IPR001980">
    <property type="entry name" value="PPAT"/>
</dbReference>
<dbReference type="InterPro" id="IPR014729">
    <property type="entry name" value="Rossmann-like_a/b/a_fold"/>
</dbReference>
<dbReference type="NCBIfam" id="TIGR01510">
    <property type="entry name" value="coaD_prev_kdtB"/>
    <property type="match status" value="1"/>
</dbReference>
<dbReference type="NCBIfam" id="TIGR00125">
    <property type="entry name" value="cyt_tran_rel"/>
    <property type="match status" value="1"/>
</dbReference>
<dbReference type="PANTHER" id="PTHR21342">
    <property type="entry name" value="PHOSPHOPANTETHEINE ADENYLYLTRANSFERASE"/>
    <property type="match status" value="1"/>
</dbReference>
<dbReference type="PANTHER" id="PTHR21342:SF1">
    <property type="entry name" value="PHOSPHOPANTETHEINE ADENYLYLTRANSFERASE"/>
    <property type="match status" value="1"/>
</dbReference>
<dbReference type="Pfam" id="PF01467">
    <property type="entry name" value="CTP_transf_like"/>
    <property type="match status" value="1"/>
</dbReference>
<dbReference type="PRINTS" id="PR01020">
    <property type="entry name" value="LPSBIOSNTHSS"/>
</dbReference>
<dbReference type="SUPFAM" id="SSF52374">
    <property type="entry name" value="Nucleotidylyl transferase"/>
    <property type="match status" value="1"/>
</dbReference>
<protein>
    <recommendedName>
        <fullName evidence="1">Phosphopantetheine adenylyltransferase</fullName>
        <ecNumber evidence="1">2.7.7.3</ecNumber>
    </recommendedName>
    <alternativeName>
        <fullName evidence="1">Dephospho-CoA pyrophosphorylase</fullName>
    </alternativeName>
    <alternativeName>
        <fullName evidence="1">Pantetheine-phosphate adenylyltransferase</fullName>
        <shortName evidence="1">PPAT</shortName>
    </alternativeName>
</protein>
<accession>Q15ZV3</accession>
<gene>
    <name evidence="1" type="primary">coaD</name>
    <name type="ordered locus">Patl_0053</name>
</gene>
<organism>
    <name type="scientific">Pseudoalteromonas atlantica (strain T6c / ATCC BAA-1087)</name>
    <dbReference type="NCBI Taxonomy" id="3042615"/>
    <lineage>
        <taxon>Bacteria</taxon>
        <taxon>Pseudomonadati</taxon>
        <taxon>Pseudomonadota</taxon>
        <taxon>Gammaproteobacteria</taxon>
        <taxon>Alteromonadales</taxon>
        <taxon>Alteromonadaceae</taxon>
        <taxon>Paraglaciecola</taxon>
    </lineage>
</organism>
<keyword id="KW-0067">ATP-binding</keyword>
<keyword id="KW-0173">Coenzyme A biosynthesis</keyword>
<keyword id="KW-0963">Cytoplasm</keyword>
<keyword id="KW-0460">Magnesium</keyword>
<keyword id="KW-0547">Nucleotide-binding</keyword>
<keyword id="KW-0548">Nucleotidyltransferase</keyword>
<keyword id="KW-0808">Transferase</keyword>